<comment type="function">
    <text evidence="1">Involved in iron-sulfur cluster biogenesis. Binds a 4Fe-4S cluster, can transfer this cluster to apoproteins, and thereby intervenes in the maturation of Fe/S proteins. Could also act as a scaffold/chaperone for damaged Fe/S proteins.</text>
</comment>
<comment type="cofactor">
    <cofactor evidence="1">
        <name>[4Fe-4S] cluster</name>
        <dbReference type="ChEBI" id="CHEBI:49883"/>
    </cofactor>
    <text evidence="1">Binds 1 [4Fe-4S] cluster per subunit. The cluster is presumably bound at the interface of two monomers.</text>
</comment>
<comment type="subunit">
    <text evidence="1">Homodimer.</text>
</comment>
<comment type="similarity">
    <text evidence="1">Belongs to the NfuA family.</text>
</comment>
<sequence>MIQISDKAQTYFRKLIEREGVPGMGVRLSAVDAGTPRADARLEFAEPADLRGDEWAIDCDGFTLYVVAASVPWMDGAEIDYVTQSTGNQQLTIKAPKIKGEAPAESASMVERVRWVVENEINPQLASHGGRVAVQEVSADGVVLLRFGGGCHGCGMADVTLKQGIEKTLMGRVPGVIAVRDATDHATGDAPYIPRDSAA</sequence>
<evidence type="ECO:0000255" key="1">
    <source>
        <dbReference type="HAMAP-Rule" id="MF_01637"/>
    </source>
</evidence>
<feature type="chain" id="PRO_1000186792" description="Fe/S biogenesis protein NfuA">
    <location>
        <begin position="1"/>
        <end position="199"/>
    </location>
</feature>
<feature type="binding site" evidence="1">
    <location>
        <position position="151"/>
    </location>
    <ligand>
        <name>[4Fe-4S] cluster</name>
        <dbReference type="ChEBI" id="CHEBI:49883"/>
    </ligand>
</feature>
<feature type="binding site" evidence="1">
    <location>
        <position position="154"/>
    </location>
    <ligand>
        <name>[4Fe-4S] cluster</name>
        <dbReference type="ChEBI" id="CHEBI:49883"/>
    </ligand>
</feature>
<proteinExistence type="inferred from homology"/>
<gene>
    <name evidence="1" type="primary">nfuA</name>
    <name type="ordered locus">PXO_01524</name>
</gene>
<dbReference type="EMBL" id="CP000967">
    <property type="protein sequence ID" value="ACD59865.1"/>
    <property type="molecule type" value="Genomic_DNA"/>
</dbReference>
<dbReference type="RefSeq" id="WP_012445381.1">
    <property type="nucleotide sequence ID" value="NC_010717.2"/>
</dbReference>
<dbReference type="SMR" id="B2STN5"/>
<dbReference type="KEGG" id="xop:PXO_01524"/>
<dbReference type="eggNOG" id="COG0316">
    <property type="taxonomic scope" value="Bacteria"/>
</dbReference>
<dbReference type="eggNOG" id="COG0694">
    <property type="taxonomic scope" value="Bacteria"/>
</dbReference>
<dbReference type="HOGENOM" id="CLU_094569_0_0_6"/>
<dbReference type="Proteomes" id="UP000001740">
    <property type="component" value="Chromosome"/>
</dbReference>
<dbReference type="GO" id="GO:0051539">
    <property type="term" value="F:4 iron, 4 sulfur cluster binding"/>
    <property type="evidence" value="ECO:0007669"/>
    <property type="project" value="UniProtKB-UniRule"/>
</dbReference>
<dbReference type="GO" id="GO:0005506">
    <property type="term" value="F:iron ion binding"/>
    <property type="evidence" value="ECO:0007669"/>
    <property type="project" value="InterPro"/>
</dbReference>
<dbReference type="GO" id="GO:0016226">
    <property type="term" value="P:iron-sulfur cluster assembly"/>
    <property type="evidence" value="ECO:0007669"/>
    <property type="project" value="UniProtKB-UniRule"/>
</dbReference>
<dbReference type="GO" id="GO:0051604">
    <property type="term" value="P:protein maturation"/>
    <property type="evidence" value="ECO:0007669"/>
    <property type="project" value="UniProtKB-UniRule"/>
</dbReference>
<dbReference type="Gene3D" id="3.30.300.130">
    <property type="entry name" value="Fe-S cluster assembly (FSCA)"/>
    <property type="match status" value="1"/>
</dbReference>
<dbReference type="Gene3D" id="2.60.300.12">
    <property type="entry name" value="HesB-like domain"/>
    <property type="match status" value="1"/>
</dbReference>
<dbReference type="HAMAP" id="MF_01637">
    <property type="entry name" value="Fe_S_biogen_NfuA"/>
    <property type="match status" value="1"/>
</dbReference>
<dbReference type="InterPro" id="IPR017726">
    <property type="entry name" value="Fe/S_biogenesis_protein_NfuA"/>
</dbReference>
<dbReference type="InterPro" id="IPR034904">
    <property type="entry name" value="FSCA_dom_sf"/>
</dbReference>
<dbReference type="InterPro" id="IPR035903">
    <property type="entry name" value="HesB-like_dom_sf"/>
</dbReference>
<dbReference type="InterPro" id="IPR001075">
    <property type="entry name" value="NIF_FeS_clus_asmbl_NifU_C"/>
</dbReference>
<dbReference type="PANTHER" id="PTHR11178:SF51">
    <property type="entry name" value="FE_S BIOGENESIS PROTEIN NFUA"/>
    <property type="match status" value="1"/>
</dbReference>
<dbReference type="PANTHER" id="PTHR11178">
    <property type="entry name" value="IRON-SULFUR CLUSTER SCAFFOLD PROTEIN NFU-RELATED"/>
    <property type="match status" value="1"/>
</dbReference>
<dbReference type="Pfam" id="PF01106">
    <property type="entry name" value="NifU"/>
    <property type="match status" value="1"/>
</dbReference>
<dbReference type="SUPFAM" id="SSF117916">
    <property type="entry name" value="Fe-S cluster assembly (FSCA) domain-like"/>
    <property type="match status" value="1"/>
</dbReference>
<dbReference type="SUPFAM" id="SSF89360">
    <property type="entry name" value="HesB-like domain"/>
    <property type="match status" value="1"/>
</dbReference>
<protein>
    <recommendedName>
        <fullName evidence="1">Fe/S biogenesis protein NfuA</fullName>
    </recommendedName>
</protein>
<keyword id="KW-0004">4Fe-4S</keyword>
<keyword id="KW-0408">Iron</keyword>
<keyword id="KW-0411">Iron-sulfur</keyword>
<keyword id="KW-0479">Metal-binding</keyword>
<reference key="1">
    <citation type="journal article" date="2008" name="BMC Genomics">
        <title>Genome sequence and rapid evolution of the rice pathogen Xanthomonas oryzae pv. oryzae PXO99A.</title>
        <authorList>
            <person name="Salzberg S.L."/>
            <person name="Sommer D.D."/>
            <person name="Schatz M.C."/>
            <person name="Phillippy A.M."/>
            <person name="Rabinowicz P.D."/>
            <person name="Tsuge S."/>
            <person name="Furutani A."/>
            <person name="Ochiai H."/>
            <person name="Delcher A.L."/>
            <person name="Kelley D."/>
            <person name="Madupu R."/>
            <person name="Puiu D."/>
            <person name="Radune D."/>
            <person name="Shumway M."/>
            <person name="Trapnell C."/>
            <person name="Aparna G."/>
            <person name="Jha G."/>
            <person name="Pandey A."/>
            <person name="Patil P.B."/>
            <person name="Ishihara H."/>
            <person name="Meyer D.F."/>
            <person name="Szurek B."/>
            <person name="Verdier V."/>
            <person name="Koebnik R."/>
            <person name="Dow J.M."/>
            <person name="Ryan R.P."/>
            <person name="Hirata H."/>
            <person name="Tsuyumu S."/>
            <person name="Won Lee S."/>
            <person name="Seo Y.-S."/>
            <person name="Sriariyanum M."/>
            <person name="Ronald P.C."/>
            <person name="Sonti R.V."/>
            <person name="Van Sluys M.-A."/>
            <person name="Leach J.E."/>
            <person name="White F.F."/>
            <person name="Bogdanove A.J."/>
        </authorList>
    </citation>
    <scope>NUCLEOTIDE SEQUENCE [LARGE SCALE GENOMIC DNA]</scope>
    <source>
        <strain>PXO99A</strain>
    </source>
</reference>
<accession>B2STN5</accession>
<organism>
    <name type="scientific">Xanthomonas oryzae pv. oryzae (strain PXO99A)</name>
    <dbReference type="NCBI Taxonomy" id="360094"/>
    <lineage>
        <taxon>Bacteria</taxon>
        <taxon>Pseudomonadati</taxon>
        <taxon>Pseudomonadota</taxon>
        <taxon>Gammaproteobacteria</taxon>
        <taxon>Lysobacterales</taxon>
        <taxon>Lysobacteraceae</taxon>
        <taxon>Xanthomonas</taxon>
    </lineage>
</organism>
<name>NFUA_XANOP</name>